<dbReference type="EC" id="5.3.1.24" evidence="1"/>
<dbReference type="EMBL" id="AL954747">
    <property type="protein sequence ID" value="CAD84603.1"/>
    <property type="molecule type" value="Genomic_DNA"/>
</dbReference>
<dbReference type="RefSeq" id="WP_011111313.1">
    <property type="nucleotide sequence ID" value="NC_004757.1"/>
</dbReference>
<dbReference type="SMR" id="Q82WI3"/>
<dbReference type="STRING" id="228410.NE0692"/>
<dbReference type="GeneID" id="87103887"/>
<dbReference type="KEGG" id="neu:NE0692"/>
<dbReference type="eggNOG" id="COG0135">
    <property type="taxonomic scope" value="Bacteria"/>
</dbReference>
<dbReference type="HOGENOM" id="CLU_076364_2_0_4"/>
<dbReference type="OrthoDB" id="9796196at2"/>
<dbReference type="PhylomeDB" id="Q82WI3"/>
<dbReference type="UniPathway" id="UPA00035">
    <property type="reaction ID" value="UER00042"/>
</dbReference>
<dbReference type="Proteomes" id="UP000001416">
    <property type="component" value="Chromosome"/>
</dbReference>
<dbReference type="GO" id="GO:0004640">
    <property type="term" value="F:phosphoribosylanthranilate isomerase activity"/>
    <property type="evidence" value="ECO:0007669"/>
    <property type="project" value="UniProtKB-UniRule"/>
</dbReference>
<dbReference type="GO" id="GO:0000162">
    <property type="term" value="P:L-tryptophan biosynthetic process"/>
    <property type="evidence" value="ECO:0007669"/>
    <property type="project" value="UniProtKB-UniRule"/>
</dbReference>
<dbReference type="CDD" id="cd00405">
    <property type="entry name" value="PRAI"/>
    <property type="match status" value="1"/>
</dbReference>
<dbReference type="FunFam" id="3.20.20.70:FF:000075">
    <property type="entry name" value="Tryptophan biosynthesis protein TRP1"/>
    <property type="match status" value="1"/>
</dbReference>
<dbReference type="Gene3D" id="3.20.20.70">
    <property type="entry name" value="Aldolase class I"/>
    <property type="match status" value="1"/>
</dbReference>
<dbReference type="HAMAP" id="MF_00135">
    <property type="entry name" value="PRAI"/>
    <property type="match status" value="1"/>
</dbReference>
<dbReference type="InterPro" id="IPR013785">
    <property type="entry name" value="Aldolase_TIM"/>
</dbReference>
<dbReference type="InterPro" id="IPR001240">
    <property type="entry name" value="PRAI_dom"/>
</dbReference>
<dbReference type="InterPro" id="IPR011060">
    <property type="entry name" value="RibuloseP-bd_barrel"/>
</dbReference>
<dbReference type="InterPro" id="IPR044643">
    <property type="entry name" value="TrpF_fam"/>
</dbReference>
<dbReference type="NCBIfam" id="NF002298">
    <property type="entry name" value="PRK01222.1-4"/>
    <property type="match status" value="1"/>
</dbReference>
<dbReference type="NCBIfam" id="NF002299">
    <property type="entry name" value="PRK01222.1-6"/>
    <property type="match status" value="1"/>
</dbReference>
<dbReference type="PANTHER" id="PTHR42894">
    <property type="entry name" value="N-(5'-PHOSPHORIBOSYL)ANTHRANILATE ISOMERASE"/>
    <property type="match status" value="1"/>
</dbReference>
<dbReference type="PANTHER" id="PTHR42894:SF1">
    <property type="entry name" value="N-(5'-PHOSPHORIBOSYL)ANTHRANILATE ISOMERASE"/>
    <property type="match status" value="1"/>
</dbReference>
<dbReference type="Pfam" id="PF00697">
    <property type="entry name" value="PRAI"/>
    <property type="match status" value="1"/>
</dbReference>
<dbReference type="SUPFAM" id="SSF51366">
    <property type="entry name" value="Ribulose-phoshate binding barrel"/>
    <property type="match status" value="1"/>
</dbReference>
<accession>Q82WI3</accession>
<proteinExistence type="inferred from homology"/>
<gene>
    <name evidence="1" type="primary">trpF</name>
    <name type="ordered locus">NE0692</name>
</gene>
<reference key="1">
    <citation type="journal article" date="2003" name="J. Bacteriol.">
        <title>Complete genome sequence of the ammonia-oxidizing bacterium and obligate chemolithoautotroph Nitrosomonas europaea.</title>
        <authorList>
            <person name="Chain P."/>
            <person name="Lamerdin J.E."/>
            <person name="Larimer F.W."/>
            <person name="Regala W."/>
            <person name="Lao V."/>
            <person name="Land M.L."/>
            <person name="Hauser L."/>
            <person name="Hooper A.B."/>
            <person name="Klotz M.G."/>
            <person name="Norton J."/>
            <person name="Sayavedra-Soto L.A."/>
            <person name="Arciero D.M."/>
            <person name="Hommes N.G."/>
            <person name="Whittaker M.M."/>
            <person name="Arp D.J."/>
        </authorList>
    </citation>
    <scope>NUCLEOTIDE SEQUENCE [LARGE SCALE GENOMIC DNA]</scope>
    <source>
        <strain>ATCC 19718 / CIP 103999 / KCTC 2705 / NBRC 14298</strain>
    </source>
</reference>
<protein>
    <recommendedName>
        <fullName evidence="1">N-(5'-phosphoribosyl)anthranilate isomerase</fullName>
        <shortName evidence="1">PRAI</shortName>
        <ecNumber evidence="1">5.3.1.24</ecNumber>
    </recommendedName>
</protein>
<feature type="chain" id="PRO_1000203211" description="N-(5'-phosphoribosyl)anthranilate isomerase">
    <location>
        <begin position="1"/>
        <end position="211"/>
    </location>
</feature>
<sequence>MRIRVKICGITRLEDAMAAVQHGADAIGFILWPQSERYISPEEAGRIVKCLPPFVRAVGVYVNPDKSWVEETSATAGLDLLQFHGDESADFCSRFHLPYIKAVRVRDGLDLLQYAQHYAGARGLLLDAYTAGIPGGTGHVFDWKLIPAELPLPWILSGGLHPGNITDAIGQTHLSAIDVSSGVEVAKGIKDVNKISAFMQRVRSCEDVRSS</sequence>
<name>TRPF_NITEU</name>
<comment type="catalytic activity">
    <reaction evidence="1">
        <text>N-(5-phospho-beta-D-ribosyl)anthranilate = 1-(2-carboxyphenylamino)-1-deoxy-D-ribulose 5-phosphate</text>
        <dbReference type="Rhea" id="RHEA:21540"/>
        <dbReference type="ChEBI" id="CHEBI:18277"/>
        <dbReference type="ChEBI" id="CHEBI:58613"/>
        <dbReference type="EC" id="5.3.1.24"/>
    </reaction>
</comment>
<comment type="pathway">
    <text evidence="1">Amino-acid biosynthesis; L-tryptophan biosynthesis; L-tryptophan from chorismate: step 3/5.</text>
</comment>
<comment type="similarity">
    <text evidence="1">Belongs to the TrpF family.</text>
</comment>
<evidence type="ECO:0000255" key="1">
    <source>
        <dbReference type="HAMAP-Rule" id="MF_00135"/>
    </source>
</evidence>
<organism>
    <name type="scientific">Nitrosomonas europaea (strain ATCC 19718 / CIP 103999 / KCTC 2705 / NBRC 14298)</name>
    <dbReference type="NCBI Taxonomy" id="228410"/>
    <lineage>
        <taxon>Bacteria</taxon>
        <taxon>Pseudomonadati</taxon>
        <taxon>Pseudomonadota</taxon>
        <taxon>Betaproteobacteria</taxon>
        <taxon>Nitrosomonadales</taxon>
        <taxon>Nitrosomonadaceae</taxon>
        <taxon>Nitrosomonas</taxon>
    </lineage>
</organism>
<keyword id="KW-0028">Amino-acid biosynthesis</keyword>
<keyword id="KW-0057">Aromatic amino acid biosynthesis</keyword>
<keyword id="KW-0413">Isomerase</keyword>
<keyword id="KW-1185">Reference proteome</keyword>
<keyword id="KW-0822">Tryptophan biosynthesis</keyword>